<comment type="function">
    <text>Plant non-specific lipid-transfer proteins transfer phospholipids as well as galactolipids across membranes. May play a role in wax or cutin deposition in the cell walls of expanding epidermal cells and certain secretory tissues.</text>
</comment>
<comment type="similarity">
    <text evidence="2">Belongs to the plant LTP family.</text>
</comment>
<proteinExistence type="inferred from homology"/>
<protein>
    <recommendedName>
        <fullName>Non-specific lipid-transfer protein</fullName>
        <shortName>LTP</shortName>
    </recommendedName>
</protein>
<feature type="signal peptide" evidence="1">
    <location>
        <begin position="1"/>
        <end position="23"/>
    </location>
</feature>
<feature type="chain" id="PRO_0000018374" description="Non-specific lipid-transfer protein">
    <location>
        <begin position="24"/>
        <end position="116"/>
    </location>
</feature>
<feature type="disulfide bond" evidence="1">
    <location>
        <begin position="27"/>
        <end position="74"/>
    </location>
</feature>
<feature type="disulfide bond" evidence="1">
    <location>
        <begin position="37"/>
        <end position="51"/>
    </location>
</feature>
<feature type="disulfide bond" evidence="1">
    <location>
        <begin position="52"/>
        <end position="97"/>
    </location>
</feature>
<feature type="disulfide bond" evidence="1">
    <location>
        <begin position="72"/>
        <end position="111"/>
    </location>
</feature>
<evidence type="ECO:0000255" key="1"/>
<evidence type="ECO:0000305" key="2"/>
<organism>
    <name type="scientific">Cicer arietinum</name>
    <name type="common">Chickpea</name>
    <name type="synonym">Garbanzo</name>
    <dbReference type="NCBI Taxonomy" id="3827"/>
    <lineage>
        <taxon>Eukaryota</taxon>
        <taxon>Viridiplantae</taxon>
        <taxon>Streptophyta</taxon>
        <taxon>Embryophyta</taxon>
        <taxon>Tracheophyta</taxon>
        <taxon>Spermatophyta</taxon>
        <taxon>Magnoliopsida</taxon>
        <taxon>eudicotyledons</taxon>
        <taxon>Gunneridae</taxon>
        <taxon>Pentapetalae</taxon>
        <taxon>rosids</taxon>
        <taxon>fabids</taxon>
        <taxon>Fabales</taxon>
        <taxon>Fabaceae</taxon>
        <taxon>Papilionoideae</taxon>
        <taxon>50 kb inversion clade</taxon>
        <taxon>NPAAA clade</taxon>
        <taxon>Hologalegina</taxon>
        <taxon>IRL clade</taxon>
        <taxon>Cicereae</taxon>
        <taxon>Cicer</taxon>
    </lineage>
</organism>
<sequence length="116" mass="11688">MASMKVVCVALIMCIVIAPMAESAITCGRVDTALAPCLGYLQGGPGPSAQCCGGVRNLNSAAVTTPDRQAACNCLKSAAGSISRLNANNAAALPGKCVVNIPYKISTSTNCATIRV</sequence>
<reference key="1">
    <citation type="online journal article" date="1998" name="Plant Gene Register">
        <title>Isolation and characterization of a cDNA encoding a nonspecific lipid-transfer protein from Cicer arietinum L. epicotyls.</title>
        <authorList>
            <person name="Romo S."/>
            <person name="Dopico B."/>
            <person name="Munoz F.J."/>
            <person name="Labrador E."/>
        </authorList>
        <locator>PGR98-035</locator>
    </citation>
    <scope>NUCLEOTIDE SEQUENCE [MRNA]</scope>
    <source>
        <strain>cv. Castellana</strain>
        <tissue>Etiolated epicotyl</tissue>
    </source>
</reference>
<name>NLTP_CICAR</name>
<accession>O23758</accession>
<dbReference type="EMBL" id="AJ002958">
    <property type="protein sequence ID" value="CAA05771.1"/>
    <property type="molecule type" value="mRNA"/>
</dbReference>
<dbReference type="RefSeq" id="NP_001296611.1">
    <property type="nucleotide sequence ID" value="NM_001309682.1"/>
</dbReference>
<dbReference type="SMR" id="O23758"/>
<dbReference type="STRING" id="3827.O23758"/>
<dbReference type="PaxDb" id="3827-XP_004506429.1"/>
<dbReference type="GeneID" id="101505155"/>
<dbReference type="KEGG" id="cam:101505155"/>
<dbReference type="eggNOG" id="ENOG502S4CI">
    <property type="taxonomic scope" value="Eukaryota"/>
</dbReference>
<dbReference type="OrthoDB" id="1890443at2759"/>
<dbReference type="Proteomes" id="UP000087171">
    <property type="component" value="Chromosome Ca6"/>
</dbReference>
<dbReference type="GO" id="GO:0008289">
    <property type="term" value="F:lipid binding"/>
    <property type="evidence" value="ECO:0007669"/>
    <property type="project" value="UniProtKB-KW"/>
</dbReference>
<dbReference type="GO" id="GO:0006869">
    <property type="term" value="P:lipid transport"/>
    <property type="evidence" value="ECO:0007669"/>
    <property type="project" value="InterPro"/>
</dbReference>
<dbReference type="CDD" id="cd01960">
    <property type="entry name" value="nsLTP1"/>
    <property type="match status" value="1"/>
</dbReference>
<dbReference type="FunFam" id="1.10.110.10:FF:000002">
    <property type="entry name" value="Non-specific lipid-transfer protein"/>
    <property type="match status" value="1"/>
</dbReference>
<dbReference type="Gene3D" id="1.10.110.10">
    <property type="entry name" value="Plant lipid-transfer and hydrophobic proteins"/>
    <property type="match status" value="1"/>
</dbReference>
<dbReference type="InterPro" id="IPR036312">
    <property type="entry name" value="Bifun_inhib/LTP/seed_sf"/>
</dbReference>
<dbReference type="InterPro" id="IPR016140">
    <property type="entry name" value="Bifunc_inhib/LTP/seed_store"/>
</dbReference>
<dbReference type="InterPro" id="IPR000528">
    <property type="entry name" value="Plant_nsLTP"/>
</dbReference>
<dbReference type="PANTHER" id="PTHR33076">
    <property type="entry name" value="NON-SPECIFIC LIPID-TRANSFER PROTEIN 2-RELATED"/>
    <property type="match status" value="1"/>
</dbReference>
<dbReference type="Pfam" id="PF00234">
    <property type="entry name" value="Tryp_alpha_amyl"/>
    <property type="match status" value="1"/>
</dbReference>
<dbReference type="PRINTS" id="PR00382">
    <property type="entry name" value="LIPIDTRNSFER"/>
</dbReference>
<dbReference type="SMART" id="SM00499">
    <property type="entry name" value="AAI"/>
    <property type="match status" value="1"/>
</dbReference>
<dbReference type="SUPFAM" id="SSF47699">
    <property type="entry name" value="Bifunctional inhibitor/lipid-transfer protein/seed storage 2S albumin"/>
    <property type="match status" value="1"/>
</dbReference>
<dbReference type="PROSITE" id="PS00597">
    <property type="entry name" value="PLANT_LTP"/>
    <property type="match status" value="1"/>
</dbReference>
<keyword id="KW-1015">Disulfide bond</keyword>
<keyword id="KW-0446">Lipid-binding</keyword>
<keyword id="KW-1185">Reference proteome</keyword>
<keyword id="KW-0732">Signal</keyword>
<keyword id="KW-0813">Transport</keyword>